<proteinExistence type="inferred from homology"/>
<reference key="1">
    <citation type="journal article" date="2011" name="Stand. Genomic Sci.">
        <title>Complete genome sequence of Rhodospirillum rubrum type strain (S1).</title>
        <authorList>
            <person name="Munk A.C."/>
            <person name="Copeland A."/>
            <person name="Lucas S."/>
            <person name="Lapidus A."/>
            <person name="Del Rio T.G."/>
            <person name="Barry K."/>
            <person name="Detter J.C."/>
            <person name="Hammon N."/>
            <person name="Israni S."/>
            <person name="Pitluck S."/>
            <person name="Brettin T."/>
            <person name="Bruce D."/>
            <person name="Han C."/>
            <person name="Tapia R."/>
            <person name="Gilna P."/>
            <person name="Schmutz J."/>
            <person name="Larimer F."/>
            <person name="Land M."/>
            <person name="Kyrpides N.C."/>
            <person name="Mavromatis K."/>
            <person name="Richardson P."/>
            <person name="Rohde M."/>
            <person name="Goeker M."/>
            <person name="Klenk H.P."/>
            <person name="Zhang Y."/>
            <person name="Roberts G.P."/>
            <person name="Reslewic S."/>
            <person name="Schwartz D.C."/>
        </authorList>
    </citation>
    <scope>NUCLEOTIDE SEQUENCE [LARGE SCALE GENOMIC DNA]</scope>
    <source>
        <strain>ATCC 11170 / ATH 1.1.1 / DSM 467 / LMG 4362 / NCIMB 8255 / S1</strain>
    </source>
</reference>
<organism>
    <name type="scientific">Rhodospirillum rubrum (strain ATCC 11170 / ATH 1.1.1 / DSM 467 / LMG 4362 / NCIMB 8255 / S1)</name>
    <dbReference type="NCBI Taxonomy" id="269796"/>
    <lineage>
        <taxon>Bacteria</taxon>
        <taxon>Pseudomonadati</taxon>
        <taxon>Pseudomonadota</taxon>
        <taxon>Alphaproteobacteria</taxon>
        <taxon>Rhodospirillales</taxon>
        <taxon>Rhodospirillaceae</taxon>
        <taxon>Rhodospirillum</taxon>
    </lineage>
</organism>
<protein>
    <recommendedName>
        <fullName evidence="1">NADH-quinone oxidoreductase subunit D</fullName>
        <ecNumber evidence="1">7.1.1.-</ecNumber>
    </recommendedName>
    <alternativeName>
        <fullName evidence="1">NADH dehydrogenase I subunit D</fullName>
    </alternativeName>
    <alternativeName>
        <fullName evidence="1">NDH-1 subunit D</fullName>
    </alternativeName>
</protein>
<evidence type="ECO:0000255" key="1">
    <source>
        <dbReference type="HAMAP-Rule" id="MF_01358"/>
    </source>
</evidence>
<name>NUOD_RHORT</name>
<comment type="function">
    <text evidence="1">NDH-1 shuttles electrons from NADH, via FMN and iron-sulfur (Fe-S) centers, to quinones in the respiratory chain. The immediate electron acceptor for the enzyme in this species is believed to be ubiquinone. Couples the redox reaction to proton translocation (for every two electrons transferred, four hydrogen ions are translocated across the cytoplasmic membrane), and thus conserves the redox energy in a proton gradient.</text>
</comment>
<comment type="catalytic activity">
    <reaction evidence="1">
        <text>a quinone + NADH + 5 H(+)(in) = a quinol + NAD(+) + 4 H(+)(out)</text>
        <dbReference type="Rhea" id="RHEA:57888"/>
        <dbReference type="ChEBI" id="CHEBI:15378"/>
        <dbReference type="ChEBI" id="CHEBI:24646"/>
        <dbReference type="ChEBI" id="CHEBI:57540"/>
        <dbReference type="ChEBI" id="CHEBI:57945"/>
        <dbReference type="ChEBI" id="CHEBI:132124"/>
    </reaction>
</comment>
<comment type="subunit">
    <text evidence="1">NDH-1 is composed of 14 different subunits. Subunits NuoB, C, D, E, F, and G constitute the peripheral sector of the complex.</text>
</comment>
<comment type="subcellular location">
    <subcellularLocation>
        <location evidence="1">Cell inner membrane</location>
        <topology evidence="1">Peripheral membrane protein</topology>
        <orientation evidence="1">Cytoplasmic side</orientation>
    </subcellularLocation>
</comment>
<comment type="similarity">
    <text evidence="1">Belongs to the complex I 49 kDa subunit family.</text>
</comment>
<dbReference type="EC" id="7.1.1.-" evidence="1"/>
<dbReference type="EMBL" id="CP000230">
    <property type="protein sequence ID" value="ABC22358.1"/>
    <property type="molecule type" value="Genomic_DNA"/>
</dbReference>
<dbReference type="RefSeq" id="WP_011389433.1">
    <property type="nucleotide sequence ID" value="NC_007643.1"/>
</dbReference>
<dbReference type="RefSeq" id="YP_426645.1">
    <property type="nucleotide sequence ID" value="NC_007643.1"/>
</dbReference>
<dbReference type="SMR" id="Q2RU37"/>
<dbReference type="STRING" id="269796.Rru_A1558"/>
<dbReference type="EnsemblBacteria" id="ABC22358">
    <property type="protein sequence ID" value="ABC22358"/>
    <property type="gene ID" value="Rru_A1558"/>
</dbReference>
<dbReference type="KEGG" id="rru:Rru_A1558"/>
<dbReference type="PATRIC" id="fig|269796.9.peg.1631"/>
<dbReference type="eggNOG" id="COG0649">
    <property type="taxonomic scope" value="Bacteria"/>
</dbReference>
<dbReference type="HOGENOM" id="CLU_015134_1_2_5"/>
<dbReference type="PhylomeDB" id="Q2RU37"/>
<dbReference type="Proteomes" id="UP000001929">
    <property type="component" value="Chromosome"/>
</dbReference>
<dbReference type="GO" id="GO:0005886">
    <property type="term" value="C:plasma membrane"/>
    <property type="evidence" value="ECO:0007669"/>
    <property type="project" value="UniProtKB-SubCell"/>
</dbReference>
<dbReference type="GO" id="GO:0051287">
    <property type="term" value="F:NAD binding"/>
    <property type="evidence" value="ECO:0007669"/>
    <property type="project" value="InterPro"/>
</dbReference>
<dbReference type="GO" id="GO:0050136">
    <property type="term" value="F:NADH:ubiquinone reductase (non-electrogenic) activity"/>
    <property type="evidence" value="ECO:0007669"/>
    <property type="project" value="UniProtKB-UniRule"/>
</dbReference>
<dbReference type="GO" id="GO:0048038">
    <property type="term" value="F:quinone binding"/>
    <property type="evidence" value="ECO:0007669"/>
    <property type="project" value="UniProtKB-KW"/>
</dbReference>
<dbReference type="FunFam" id="1.10.645.10:FF:000005">
    <property type="entry name" value="NADH-quinone oxidoreductase subunit D"/>
    <property type="match status" value="1"/>
</dbReference>
<dbReference type="Gene3D" id="1.10.645.10">
    <property type="entry name" value="Cytochrome-c3 Hydrogenase, chain B"/>
    <property type="match status" value="1"/>
</dbReference>
<dbReference type="HAMAP" id="MF_01358">
    <property type="entry name" value="NDH1_NuoD"/>
    <property type="match status" value="1"/>
</dbReference>
<dbReference type="InterPro" id="IPR001135">
    <property type="entry name" value="NADH_Q_OxRdtase_suD"/>
</dbReference>
<dbReference type="InterPro" id="IPR014029">
    <property type="entry name" value="NADH_UbQ_OxRdtase_49kDa_CS"/>
</dbReference>
<dbReference type="InterPro" id="IPR022885">
    <property type="entry name" value="NDH1_su_D/H"/>
</dbReference>
<dbReference type="InterPro" id="IPR029014">
    <property type="entry name" value="NiFe-Hase_large"/>
</dbReference>
<dbReference type="NCBIfam" id="TIGR01962">
    <property type="entry name" value="NuoD"/>
    <property type="match status" value="1"/>
</dbReference>
<dbReference type="NCBIfam" id="NF004739">
    <property type="entry name" value="PRK06075.1"/>
    <property type="match status" value="1"/>
</dbReference>
<dbReference type="PANTHER" id="PTHR11993:SF10">
    <property type="entry name" value="NADH DEHYDROGENASE [UBIQUINONE] IRON-SULFUR PROTEIN 2, MITOCHONDRIAL"/>
    <property type="match status" value="1"/>
</dbReference>
<dbReference type="PANTHER" id="PTHR11993">
    <property type="entry name" value="NADH-UBIQUINONE OXIDOREDUCTASE 49 KDA SUBUNIT"/>
    <property type="match status" value="1"/>
</dbReference>
<dbReference type="Pfam" id="PF00346">
    <property type="entry name" value="Complex1_49kDa"/>
    <property type="match status" value="1"/>
</dbReference>
<dbReference type="SUPFAM" id="SSF56762">
    <property type="entry name" value="HydB/Nqo4-like"/>
    <property type="match status" value="1"/>
</dbReference>
<dbReference type="PROSITE" id="PS00535">
    <property type="entry name" value="COMPLEX1_49K"/>
    <property type="match status" value="1"/>
</dbReference>
<accession>Q2RU37</accession>
<feature type="chain" id="PRO_0000357909" description="NADH-quinone oxidoreductase subunit D">
    <location>
        <begin position="1"/>
        <end position="392"/>
    </location>
</feature>
<keyword id="KW-0997">Cell inner membrane</keyword>
<keyword id="KW-1003">Cell membrane</keyword>
<keyword id="KW-0472">Membrane</keyword>
<keyword id="KW-0520">NAD</keyword>
<keyword id="KW-0874">Quinone</keyword>
<keyword id="KW-1185">Reference proteome</keyword>
<keyword id="KW-1278">Translocase</keyword>
<keyword id="KW-0813">Transport</keyword>
<keyword id="KW-0830">Ubiquinone</keyword>
<gene>
    <name evidence="1" type="primary">nuoD</name>
    <name type="ordered locus">Rru_A1558</name>
</gene>
<sequence length="392" mass="44279">MAQTEIKSYTLNFGPQHPAAHGVLRLVLELSGEVIERADPHIGLLHRGTEKLIEYKTYLQALPYFDRLDYACPMNQEHAYVLAVEKLLGITVPPRAQYLRTLFNEVTRLINHIMNTTSMALDIGAMTPLLYGFEEREHLLEFSERASGARMHAAWFRPGGVARDVPPDLLEDILKFCDSFPKYLDDVEHLLDENRIFKQRTVDIGKVTAQQALDWGFTGPVLRGCGVPWDLRKSQPYDAYAAMDFDIPTGANGDCYDRYLVRMAEQRQSIRIMRQCIEKMPDGPVKAVDHKVTPPSRGEMKSSMEALIHHFKLFTEGFKVPEGETYTAVEAATGEFGVYLVSDGTNRPYRCKIRSPGYVHLQGLDLMSRGHMLADVVANIGSIDVVFGEIDR</sequence>